<accession>B4TXB4</accession>
<evidence type="ECO:0000255" key="1">
    <source>
        <dbReference type="HAMAP-Rule" id="MF_00115"/>
    </source>
</evidence>
<proteinExistence type="inferred from homology"/>
<gene>
    <name evidence="1" type="primary">mscL</name>
    <name type="ordered locus">SeSA_A3607</name>
</gene>
<sequence>MSFIKEFREFAMRGNVVDLAVGVIIGAAFGKIVSSLVADIIMPPLGLLIGGIDFKQFAFTLREAQGDIPAVVMHYGVFIQNVFDFVIVAFAIFVAIKLINRLNRKKAEEPAAPPAPSKEEVLLGEIRDLLKEQNNRS</sequence>
<protein>
    <recommendedName>
        <fullName evidence="1">Large-conductance mechanosensitive channel</fullName>
    </recommendedName>
</protein>
<name>MSCL_SALSV</name>
<feature type="chain" id="PRO_1000094926" description="Large-conductance mechanosensitive channel">
    <location>
        <begin position="1"/>
        <end position="137"/>
    </location>
</feature>
<feature type="transmembrane region" description="Helical" evidence="1">
    <location>
        <begin position="10"/>
        <end position="30"/>
    </location>
</feature>
<feature type="transmembrane region" description="Helical" evidence="1">
    <location>
        <begin position="76"/>
        <end position="96"/>
    </location>
</feature>
<organism>
    <name type="scientific">Salmonella schwarzengrund (strain CVM19633)</name>
    <dbReference type="NCBI Taxonomy" id="439843"/>
    <lineage>
        <taxon>Bacteria</taxon>
        <taxon>Pseudomonadati</taxon>
        <taxon>Pseudomonadota</taxon>
        <taxon>Gammaproteobacteria</taxon>
        <taxon>Enterobacterales</taxon>
        <taxon>Enterobacteriaceae</taxon>
        <taxon>Salmonella</taxon>
    </lineage>
</organism>
<keyword id="KW-0997">Cell inner membrane</keyword>
<keyword id="KW-1003">Cell membrane</keyword>
<keyword id="KW-0407">Ion channel</keyword>
<keyword id="KW-0406">Ion transport</keyword>
<keyword id="KW-0472">Membrane</keyword>
<keyword id="KW-0812">Transmembrane</keyword>
<keyword id="KW-1133">Transmembrane helix</keyword>
<keyword id="KW-0813">Transport</keyword>
<comment type="function">
    <text evidence="1">Channel that opens in response to stretch forces in the membrane lipid bilayer. May participate in the regulation of osmotic pressure changes within the cell.</text>
</comment>
<comment type="subunit">
    <text evidence="1">Homopentamer.</text>
</comment>
<comment type="subcellular location">
    <subcellularLocation>
        <location evidence="1">Cell inner membrane</location>
        <topology evidence="1">Multi-pass membrane protein</topology>
    </subcellularLocation>
</comment>
<comment type="similarity">
    <text evidence="1">Belongs to the MscL family.</text>
</comment>
<dbReference type="EMBL" id="CP001127">
    <property type="protein sequence ID" value="ACF91760.1"/>
    <property type="molecule type" value="Genomic_DNA"/>
</dbReference>
<dbReference type="RefSeq" id="WP_000008119.1">
    <property type="nucleotide sequence ID" value="NC_011094.1"/>
</dbReference>
<dbReference type="SMR" id="B4TXB4"/>
<dbReference type="KEGG" id="sew:SeSA_A3607"/>
<dbReference type="HOGENOM" id="CLU_095787_0_0_6"/>
<dbReference type="Proteomes" id="UP000001865">
    <property type="component" value="Chromosome"/>
</dbReference>
<dbReference type="GO" id="GO:0005886">
    <property type="term" value="C:plasma membrane"/>
    <property type="evidence" value="ECO:0007669"/>
    <property type="project" value="UniProtKB-SubCell"/>
</dbReference>
<dbReference type="GO" id="GO:0008381">
    <property type="term" value="F:mechanosensitive monoatomic ion channel activity"/>
    <property type="evidence" value="ECO:0007669"/>
    <property type="project" value="UniProtKB-UniRule"/>
</dbReference>
<dbReference type="FunFam" id="1.10.1200.120:FF:000001">
    <property type="entry name" value="Large-conductance mechanosensitive channel"/>
    <property type="match status" value="1"/>
</dbReference>
<dbReference type="Gene3D" id="1.10.1200.120">
    <property type="entry name" value="Large-conductance mechanosensitive channel, MscL, domain 1"/>
    <property type="match status" value="1"/>
</dbReference>
<dbReference type="HAMAP" id="MF_00115">
    <property type="entry name" value="MscL"/>
    <property type="match status" value="1"/>
</dbReference>
<dbReference type="InterPro" id="IPR019823">
    <property type="entry name" value="Mechanosensitive_channel_CS"/>
</dbReference>
<dbReference type="InterPro" id="IPR001185">
    <property type="entry name" value="MS_channel"/>
</dbReference>
<dbReference type="InterPro" id="IPR037673">
    <property type="entry name" value="MSC/AndL"/>
</dbReference>
<dbReference type="InterPro" id="IPR036019">
    <property type="entry name" value="MscL_channel"/>
</dbReference>
<dbReference type="NCBIfam" id="TIGR00220">
    <property type="entry name" value="mscL"/>
    <property type="match status" value="1"/>
</dbReference>
<dbReference type="NCBIfam" id="NF001841">
    <property type="entry name" value="PRK00567.1-1"/>
    <property type="match status" value="1"/>
</dbReference>
<dbReference type="NCBIfam" id="NF001843">
    <property type="entry name" value="PRK00567.1-4"/>
    <property type="match status" value="1"/>
</dbReference>
<dbReference type="PANTHER" id="PTHR30266:SF2">
    <property type="entry name" value="LARGE-CONDUCTANCE MECHANOSENSITIVE CHANNEL"/>
    <property type="match status" value="1"/>
</dbReference>
<dbReference type="PANTHER" id="PTHR30266">
    <property type="entry name" value="MECHANOSENSITIVE CHANNEL MSCL"/>
    <property type="match status" value="1"/>
</dbReference>
<dbReference type="Pfam" id="PF01741">
    <property type="entry name" value="MscL"/>
    <property type="match status" value="1"/>
</dbReference>
<dbReference type="PRINTS" id="PR01264">
    <property type="entry name" value="MECHCHANNEL"/>
</dbReference>
<dbReference type="SUPFAM" id="SSF81330">
    <property type="entry name" value="Gated mechanosensitive channel"/>
    <property type="match status" value="1"/>
</dbReference>
<dbReference type="PROSITE" id="PS01327">
    <property type="entry name" value="MSCL"/>
    <property type="match status" value="1"/>
</dbReference>
<reference key="1">
    <citation type="journal article" date="2011" name="J. Bacteriol.">
        <title>Comparative genomics of 28 Salmonella enterica isolates: evidence for CRISPR-mediated adaptive sublineage evolution.</title>
        <authorList>
            <person name="Fricke W.F."/>
            <person name="Mammel M.K."/>
            <person name="McDermott P.F."/>
            <person name="Tartera C."/>
            <person name="White D.G."/>
            <person name="Leclerc J.E."/>
            <person name="Ravel J."/>
            <person name="Cebula T.A."/>
        </authorList>
    </citation>
    <scope>NUCLEOTIDE SEQUENCE [LARGE SCALE GENOMIC DNA]</scope>
    <source>
        <strain>CVM19633</strain>
    </source>
</reference>